<organism>
    <name type="scientific">Xenopus laevis</name>
    <name type="common">African clawed frog</name>
    <dbReference type="NCBI Taxonomy" id="8355"/>
    <lineage>
        <taxon>Eukaryota</taxon>
        <taxon>Metazoa</taxon>
        <taxon>Chordata</taxon>
        <taxon>Craniata</taxon>
        <taxon>Vertebrata</taxon>
        <taxon>Euteleostomi</taxon>
        <taxon>Amphibia</taxon>
        <taxon>Batrachia</taxon>
        <taxon>Anura</taxon>
        <taxon>Pipoidea</taxon>
        <taxon>Pipidae</taxon>
        <taxon>Xenopodinae</taxon>
        <taxon>Xenopus</taxon>
        <taxon>Xenopus</taxon>
    </lineage>
</organism>
<gene>
    <name type="primary">ruvbl2</name>
</gene>
<comment type="function">
    <text evidence="2 3">Has single-stranded DNA-stimulated ATPase and ATP-dependent DNA helicase (5' to 3') activity suggesting a role in nuclear processes such as recombination and transcription (By similarity). Proposed core component of the chromatin remodeling INO80 complex which exhibits DNA- and nucleosome-activated ATPase activity and catalyzes ATP-dependent nucleosome sliding (By similarity). Involved in the endoplasmic reticulum (ER)-associated degradation (ERAD) pathway where it negatively regulates expression of ER stress response genes (By similarity).</text>
</comment>
<comment type="catalytic activity">
    <reaction evidence="2">
        <text>ATP + H2O = ADP + phosphate + H(+)</text>
        <dbReference type="Rhea" id="RHEA:13065"/>
        <dbReference type="ChEBI" id="CHEBI:15377"/>
        <dbReference type="ChEBI" id="CHEBI:15378"/>
        <dbReference type="ChEBI" id="CHEBI:30616"/>
        <dbReference type="ChEBI" id="CHEBI:43474"/>
        <dbReference type="ChEBI" id="CHEBI:456216"/>
        <dbReference type="EC" id="3.6.4.12"/>
    </reaction>
    <physiologicalReaction direction="left-to-right" evidence="2">
        <dbReference type="Rhea" id="RHEA:13066"/>
    </physiologicalReaction>
</comment>
<comment type="subunit">
    <text evidence="3 6">Forms homohexameric rings (Probable). Can form a dodecamer with ruvbl2 made of two stacked hexameric rings (By similarity). Is a component of the RNA polymerase II holoenzyme complex (By similarity). Component of the chromatin-remodeling Ino80 complex. Component of some MLL1/MLL complex (By similarity).</text>
</comment>
<comment type="subcellular location">
    <subcellularLocation>
        <location evidence="1">Nucleus</location>
    </subcellularLocation>
    <subcellularLocation>
        <location evidence="4 5">Dynein axonemal particle</location>
    </subcellularLocation>
</comment>
<comment type="developmental stage">
    <text>Expression decreases until onset of zygotic transcription before increasing again at later stages. Is expressed in neural crest cells, in particular in a subpopulation that give raise to the adrenal medulla.</text>
</comment>
<comment type="similarity">
    <text evidence="6">Belongs to the RuvB family.</text>
</comment>
<reference key="1">
    <citation type="journal article" date="2000" name="Mech. Dev.">
        <title>Expression of Xenopus homologs of the beta-catenin binding protein pontin52.</title>
        <authorList>
            <person name="Etard C."/>
            <person name="Wedlich D."/>
            <person name="Bauer A."/>
            <person name="Huber O."/>
            <person name="Kuehl M."/>
        </authorList>
    </citation>
    <scope>NUCLEOTIDE SEQUENCE [MRNA]</scope>
</reference>
<reference key="2">
    <citation type="journal article" date="2018" name="Elife">
        <title>A liquid-like organelle at the root of motile ciliopathy.</title>
        <authorList>
            <person name="Huizar R.L."/>
            <person name="Lee C."/>
            <person name="Boulgakov A.A."/>
            <person name="Horani A."/>
            <person name="Tu F."/>
            <person name="Marcotte E.M."/>
            <person name="Brody S.L."/>
            <person name="Wallingford J.B."/>
        </authorList>
    </citation>
    <scope>SUBCELLULAR LOCATION</scope>
</reference>
<reference key="3">
    <citation type="journal article" date="2020" name="Elife">
        <title>Functional partitioning of a liquid-like organelle during assembly of axonemal dyneins.</title>
        <authorList>
            <person name="Lee C."/>
            <person name="Cox R.M."/>
            <person name="Papoulas O."/>
            <person name="Horani A."/>
            <person name="Drew K."/>
            <person name="Devitt C.C."/>
            <person name="Brody S.L."/>
            <person name="Marcotte E.M."/>
            <person name="Wallingford J.B."/>
        </authorList>
    </citation>
    <scope>SUBCELLULAR LOCATION</scope>
</reference>
<proteinExistence type="evidence at transcript level"/>
<sequence length="462" mass="51188">MATMAATKVPEVRDVTRIERIGAHSHIRGLGLDDALEPRQVSQGMVGQLASRRAAGVILEMIKEGKIAGRAVLIAGQPGTGKTAIAMGMAQALGSDTPFTAIAGSEIFSLEMSKTEALTQAFRRSIGVRIKEETEIIEGEVVEVQIDRPATGTGAKVGKLTLKTTEMETIYDLGTKMIESLTKEKVQAGDVITIDKATGKITKLGRAFTRARDYDAMGSQTKFVQCPDGELQKRKEVVHTVSLHEIDVINSRTQGFLALFSGDTGEIKSEVREQINAKVAEWREEGKAEIIPGVLFIDEVHMLDIECFSFLNRALESDMAPVLIMATNRGITRIRGTNYQSPHGIPIDLLDRLLIISTSPYNEKETKQILKIRCEEEDVDMSEDAYTVLTRIGLETSLRYSMQLITAASLVCRKRKGTEVQVDDIKRVYSLFLDESRSTQYMKEYQDAFMFNEMKTDTMDTS</sequence>
<protein>
    <recommendedName>
        <fullName>RuvB-like 2</fullName>
        <ecNumber evidence="2">3.6.4.12</ecNumber>
    </recommendedName>
    <alternativeName>
        <fullName>Reptin</fullName>
    </alternativeName>
</protein>
<name>RUVB2_XENLA</name>
<evidence type="ECO:0000250" key="1"/>
<evidence type="ECO:0000250" key="2">
    <source>
        <dbReference type="UniProtKB" id="P83571"/>
    </source>
</evidence>
<evidence type="ECO:0000250" key="3">
    <source>
        <dbReference type="UniProtKB" id="Q9Y230"/>
    </source>
</evidence>
<evidence type="ECO:0000269" key="4">
    <source>
    </source>
</evidence>
<evidence type="ECO:0000269" key="5">
    <source>
    </source>
</evidence>
<evidence type="ECO:0000305" key="6"/>
<accession>Q9DE27</accession>
<keyword id="KW-0067">ATP-binding</keyword>
<keyword id="KW-0963">Cytoplasm</keyword>
<keyword id="KW-0227">DNA damage</keyword>
<keyword id="KW-0233">DNA recombination</keyword>
<keyword id="KW-0234">DNA repair</keyword>
<keyword id="KW-0347">Helicase</keyword>
<keyword id="KW-0378">Hydrolase</keyword>
<keyword id="KW-0547">Nucleotide-binding</keyword>
<keyword id="KW-0539">Nucleus</keyword>
<keyword id="KW-1185">Reference proteome</keyword>
<keyword id="KW-0804">Transcription</keyword>
<keyword id="KW-0805">Transcription regulation</keyword>
<feature type="chain" id="PRO_0000165647" description="RuvB-like 2">
    <location>
        <begin position="1"/>
        <end position="462"/>
    </location>
</feature>
<feature type="binding site" evidence="1">
    <location>
        <begin position="76"/>
        <end position="83"/>
    </location>
    <ligand>
        <name>ATP</name>
        <dbReference type="ChEBI" id="CHEBI:30616"/>
    </ligand>
</feature>
<dbReference type="EC" id="3.6.4.12" evidence="2"/>
<dbReference type="EMBL" id="AF218071">
    <property type="protein sequence ID" value="AAG44126.1"/>
    <property type="molecule type" value="mRNA"/>
</dbReference>
<dbReference type="SMR" id="Q9DE27"/>
<dbReference type="AGR" id="Xenbase:XB-GENE-483348"/>
<dbReference type="Xenbase" id="XB-GENE-483348">
    <property type="gene designation" value="ruvbl2.L"/>
</dbReference>
<dbReference type="OrthoDB" id="10060499at2759"/>
<dbReference type="Proteomes" id="UP000186698">
    <property type="component" value="Unplaced"/>
</dbReference>
<dbReference type="GO" id="GO:0120293">
    <property type="term" value="C:dynein axonemal particle"/>
    <property type="evidence" value="ECO:0000314"/>
    <property type="project" value="UniProtKB"/>
</dbReference>
<dbReference type="GO" id="GO:0031011">
    <property type="term" value="C:Ino80 complex"/>
    <property type="evidence" value="ECO:0000318"/>
    <property type="project" value="GO_Central"/>
</dbReference>
<dbReference type="GO" id="GO:0071339">
    <property type="term" value="C:MLL1 complex"/>
    <property type="evidence" value="ECO:0000250"/>
    <property type="project" value="UniProtKB"/>
</dbReference>
<dbReference type="GO" id="GO:0035267">
    <property type="term" value="C:NuA4 histone acetyltransferase complex"/>
    <property type="evidence" value="ECO:0000318"/>
    <property type="project" value="GO_Central"/>
</dbReference>
<dbReference type="GO" id="GO:0097255">
    <property type="term" value="C:R2TP complex"/>
    <property type="evidence" value="ECO:0000318"/>
    <property type="project" value="GO_Central"/>
</dbReference>
<dbReference type="GO" id="GO:0000812">
    <property type="term" value="C:Swr1 complex"/>
    <property type="evidence" value="ECO:0000250"/>
    <property type="project" value="UniProtKB"/>
</dbReference>
<dbReference type="GO" id="GO:0005524">
    <property type="term" value="F:ATP binding"/>
    <property type="evidence" value="ECO:0007669"/>
    <property type="project" value="UniProtKB-KW"/>
</dbReference>
<dbReference type="GO" id="GO:0016887">
    <property type="term" value="F:ATP hydrolysis activity"/>
    <property type="evidence" value="ECO:0007669"/>
    <property type="project" value="InterPro"/>
</dbReference>
<dbReference type="GO" id="GO:0003678">
    <property type="term" value="F:DNA helicase activity"/>
    <property type="evidence" value="ECO:0000318"/>
    <property type="project" value="GO_Central"/>
</dbReference>
<dbReference type="GO" id="GO:0000492">
    <property type="term" value="P:box C/D snoRNP assembly"/>
    <property type="evidence" value="ECO:0000318"/>
    <property type="project" value="GO_Central"/>
</dbReference>
<dbReference type="GO" id="GO:0006338">
    <property type="term" value="P:chromatin remodeling"/>
    <property type="evidence" value="ECO:0000318"/>
    <property type="project" value="GO_Central"/>
</dbReference>
<dbReference type="GO" id="GO:0006310">
    <property type="term" value="P:DNA recombination"/>
    <property type="evidence" value="ECO:0007669"/>
    <property type="project" value="UniProtKB-KW"/>
</dbReference>
<dbReference type="GO" id="GO:0006281">
    <property type="term" value="P:DNA repair"/>
    <property type="evidence" value="ECO:0007669"/>
    <property type="project" value="UniProtKB-KW"/>
</dbReference>
<dbReference type="GO" id="GO:0006357">
    <property type="term" value="P:regulation of transcription by RNA polymerase II"/>
    <property type="evidence" value="ECO:0000318"/>
    <property type="project" value="GO_Central"/>
</dbReference>
<dbReference type="FunFam" id="3.40.50.300:FF:002221">
    <property type="entry name" value="RuvB-like 2"/>
    <property type="match status" value="2"/>
</dbReference>
<dbReference type="FunFam" id="1.10.8.60:FF:000010">
    <property type="entry name" value="RuvB-like helicase"/>
    <property type="match status" value="1"/>
</dbReference>
<dbReference type="FunFam" id="2.40.50.360:FF:000002">
    <property type="entry name" value="RuvB-like helicase"/>
    <property type="match status" value="1"/>
</dbReference>
<dbReference type="Gene3D" id="1.10.8.60">
    <property type="match status" value="1"/>
</dbReference>
<dbReference type="Gene3D" id="3.40.50.300">
    <property type="entry name" value="P-loop containing nucleotide triphosphate hydrolases"/>
    <property type="match status" value="1"/>
</dbReference>
<dbReference type="Gene3D" id="2.40.50.360">
    <property type="entry name" value="RuvB-like helicase, domain II"/>
    <property type="match status" value="1"/>
</dbReference>
<dbReference type="InterPro" id="IPR003593">
    <property type="entry name" value="AAA+_ATPase"/>
</dbReference>
<dbReference type="InterPro" id="IPR027417">
    <property type="entry name" value="P-loop_NTPase"/>
</dbReference>
<dbReference type="InterPro" id="IPR027238">
    <property type="entry name" value="RuvB-like"/>
</dbReference>
<dbReference type="InterPro" id="IPR041048">
    <property type="entry name" value="RuvB-like_C"/>
</dbReference>
<dbReference type="InterPro" id="IPR042487">
    <property type="entry name" value="RuvBL1/2_DNA/RNA_bd_dom"/>
</dbReference>
<dbReference type="InterPro" id="IPR010339">
    <property type="entry name" value="TIP49_P-loop"/>
</dbReference>
<dbReference type="PANTHER" id="PTHR11093">
    <property type="entry name" value="RUVB-RELATED REPTIN AND PONTIN"/>
    <property type="match status" value="1"/>
</dbReference>
<dbReference type="Pfam" id="PF06068">
    <property type="entry name" value="TIP49"/>
    <property type="match status" value="1"/>
</dbReference>
<dbReference type="Pfam" id="PF17856">
    <property type="entry name" value="TIP49_C"/>
    <property type="match status" value="1"/>
</dbReference>
<dbReference type="SMART" id="SM00382">
    <property type="entry name" value="AAA"/>
    <property type="match status" value="1"/>
</dbReference>
<dbReference type="SUPFAM" id="SSF52540">
    <property type="entry name" value="P-loop containing nucleoside triphosphate hydrolases"/>
    <property type="match status" value="1"/>
</dbReference>